<comment type="function">
    <text evidence="1">Negatively regulates transcription of bacterial ribonucleotide reductase nrd genes and operons by binding to NrdR-boxes.</text>
</comment>
<comment type="cofactor">
    <cofactor evidence="1">
        <name>Zn(2+)</name>
        <dbReference type="ChEBI" id="CHEBI:29105"/>
    </cofactor>
    <text evidence="1">Binds 1 zinc ion.</text>
</comment>
<comment type="similarity">
    <text evidence="1">Belongs to the NrdR family.</text>
</comment>
<comment type="sequence caution" evidence="2">
    <conflict type="erroneous initiation">
        <sequence resource="EMBL-CDS" id="ACP10378"/>
    </conflict>
</comment>
<protein>
    <recommendedName>
        <fullName evidence="1">Transcriptional repressor NrdR</fullName>
    </recommendedName>
</protein>
<sequence>MHCPFCSENDTKVIDSRLVADGHQVRRRRQCLACNERFTTFETAELVMPRVIKSNGNREPFDEEKMIGGLQRALEKRPVSADAIELAISTIKSKLRATGEREVPSKLIGNLVMEQLKVLDKVAYIRFASVYRSFEDVREFGEEIAKLQD</sequence>
<feature type="chain" id="PRO_1000080854" description="Transcriptional repressor NrdR">
    <location>
        <begin position="1"/>
        <end position="149"/>
    </location>
</feature>
<feature type="domain" description="ATP-cone" evidence="1">
    <location>
        <begin position="49"/>
        <end position="139"/>
    </location>
</feature>
<feature type="zinc finger region" evidence="1">
    <location>
        <begin position="3"/>
        <end position="34"/>
    </location>
</feature>
<keyword id="KW-0067">ATP-binding</keyword>
<keyword id="KW-0238">DNA-binding</keyword>
<keyword id="KW-0479">Metal-binding</keyword>
<keyword id="KW-0547">Nucleotide-binding</keyword>
<keyword id="KW-0678">Repressor</keyword>
<keyword id="KW-0804">Transcription</keyword>
<keyword id="KW-0805">Transcription regulation</keyword>
<keyword id="KW-0862">Zinc</keyword>
<keyword id="KW-0863">Zinc-finger</keyword>
<proteinExistence type="inferred from homology"/>
<reference key="1">
    <citation type="submission" date="2007-03" db="EMBL/GenBank/DDBJ databases">
        <authorList>
            <person name="Heidelberg J."/>
        </authorList>
    </citation>
    <scope>NUCLEOTIDE SEQUENCE [LARGE SCALE GENOMIC DNA]</scope>
    <source>
        <strain>ATCC 39541 / Classical Ogawa 395 / O395</strain>
    </source>
</reference>
<reference key="2">
    <citation type="journal article" date="2008" name="PLoS ONE">
        <title>A recalibrated molecular clock and independent origins for the cholera pandemic clones.</title>
        <authorList>
            <person name="Feng L."/>
            <person name="Reeves P.R."/>
            <person name="Lan R."/>
            <person name="Ren Y."/>
            <person name="Gao C."/>
            <person name="Zhou Z."/>
            <person name="Ren Y."/>
            <person name="Cheng J."/>
            <person name="Wang W."/>
            <person name="Wang J."/>
            <person name="Qian W."/>
            <person name="Li D."/>
            <person name="Wang L."/>
        </authorList>
    </citation>
    <scope>NUCLEOTIDE SEQUENCE [LARGE SCALE GENOMIC DNA]</scope>
    <source>
        <strain>ATCC 39541 / Classical Ogawa 395 / O395</strain>
    </source>
</reference>
<dbReference type="EMBL" id="CP000627">
    <property type="protein sequence ID" value="ABQ20990.1"/>
    <property type="molecule type" value="Genomic_DNA"/>
</dbReference>
<dbReference type="EMBL" id="CP001235">
    <property type="protein sequence ID" value="ACP10378.1"/>
    <property type="status" value="ALT_INIT"/>
    <property type="molecule type" value="Genomic_DNA"/>
</dbReference>
<dbReference type="RefSeq" id="WP_000543544.1">
    <property type="nucleotide sequence ID" value="NZ_JAACZH010000008.1"/>
</dbReference>
<dbReference type="SMR" id="A5F601"/>
<dbReference type="GeneID" id="89513734"/>
<dbReference type="KEGG" id="vco:VC0395_A1862"/>
<dbReference type="KEGG" id="vcr:VC395_2388"/>
<dbReference type="PATRIC" id="fig|345073.21.peg.2302"/>
<dbReference type="eggNOG" id="COG1327">
    <property type="taxonomic scope" value="Bacteria"/>
</dbReference>
<dbReference type="HOGENOM" id="CLU_108412_0_0_6"/>
<dbReference type="OrthoDB" id="9807461at2"/>
<dbReference type="Proteomes" id="UP000000249">
    <property type="component" value="Chromosome 2"/>
</dbReference>
<dbReference type="GO" id="GO:0005524">
    <property type="term" value="F:ATP binding"/>
    <property type="evidence" value="ECO:0007669"/>
    <property type="project" value="UniProtKB-KW"/>
</dbReference>
<dbReference type="GO" id="GO:0003677">
    <property type="term" value="F:DNA binding"/>
    <property type="evidence" value="ECO:0007669"/>
    <property type="project" value="UniProtKB-KW"/>
</dbReference>
<dbReference type="GO" id="GO:0008270">
    <property type="term" value="F:zinc ion binding"/>
    <property type="evidence" value="ECO:0007669"/>
    <property type="project" value="UniProtKB-UniRule"/>
</dbReference>
<dbReference type="GO" id="GO:0045892">
    <property type="term" value="P:negative regulation of DNA-templated transcription"/>
    <property type="evidence" value="ECO:0007669"/>
    <property type="project" value="UniProtKB-UniRule"/>
</dbReference>
<dbReference type="HAMAP" id="MF_00440">
    <property type="entry name" value="NrdR"/>
    <property type="match status" value="1"/>
</dbReference>
<dbReference type="InterPro" id="IPR005144">
    <property type="entry name" value="ATP-cone_dom"/>
</dbReference>
<dbReference type="InterPro" id="IPR055173">
    <property type="entry name" value="NrdR-like_N"/>
</dbReference>
<dbReference type="InterPro" id="IPR003796">
    <property type="entry name" value="RNR_NrdR-like"/>
</dbReference>
<dbReference type="NCBIfam" id="TIGR00244">
    <property type="entry name" value="transcriptional regulator NrdR"/>
    <property type="match status" value="1"/>
</dbReference>
<dbReference type="PANTHER" id="PTHR30455">
    <property type="entry name" value="TRANSCRIPTIONAL REPRESSOR NRDR"/>
    <property type="match status" value="1"/>
</dbReference>
<dbReference type="PANTHER" id="PTHR30455:SF2">
    <property type="entry name" value="TRANSCRIPTIONAL REPRESSOR NRDR"/>
    <property type="match status" value="1"/>
</dbReference>
<dbReference type="Pfam" id="PF03477">
    <property type="entry name" value="ATP-cone"/>
    <property type="match status" value="1"/>
</dbReference>
<dbReference type="Pfam" id="PF22811">
    <property type="entry name" value="Zn_ribbon_NrdR"/>
    <property type="match status" value="1"/>
</dbReference>
<dbReference type="PROSITE" id="PS51161">
    <property type="entry name" value="ATP_CONE"/>
    <property type="match status" value="1"/>
</dbReference>
<evidence type="ECO:0000255" key="1">
    <source>
        <dbReference type="HAMAP-Rule" id="MF_00440"/>
    </source>
</evidence>
<evidence type="ECO:0000305" key="2"/>
<accession>A5F601</accession>
<accession>C3M3M9</accession>
<gene>
    <name evidence="1" type="primary">nrdR</name>
    <name type="ordered locus">VC0395_A1862</name>
    <name type="ordered locus">VC395_2388</name>
</gene>
<name>NRDR_VIBC3</name>
<organism>
    <name type="scientific">Vibrio cholerae serotype O1 (strain ATCC 39541 / Classical Ogawa 395 / O395)</name>
    <dbReference type="NCBI Taxonomy" id="345073"/>
    <lineage>
        <taxon>Bacteria</taxon>
        <taxon>Pseudomonadati</taxon>
        <taxon>Pseudomonadota</taxon>
        <taxon>Gammaproteobacteria</taxon>
        <taxon>Vibrionales</taxon>
        <taxon>Vibrionaceae</taxon>
        <taxon>Vibrio</taxon>
    </lineage>
</organism>